<protein>
    <recommendedName>
        <fullName evidence="1">Small ribosomal subunit protein uS13</fullName>
    </recommendedName>
    <alternativeName>
        <fullName evidence="3">30S ribosomal protein S13</fullName>
    </alternativeName>
</protein>
<organism>
    <name type="scientific">Yersinia pestis (strain Pestoides F)</name>
    <dbReference type="NCBI Taxonomy" id="386656"/>
    <lineage>
        <taxon>Bacteria</taxon>
        <taxon>Pseudomonadati</taxon>
        <taxon>Pseudomonadota</taxon>
        <taxon>Gammaproteobacteria</taxon>
        <taxon>Enterobacterales</taxon>
        <taxon>Yersiniaceae</taxon>
        <taxon>Yersinia</taxon>
    </lineage>
</organism>
<sequence length="118" mass="13252">MARIAGINIPDQKHTVIALTAIFGIGKTRSQAICVAAGIAEHVKISELSEEQIEKLRDEVAKYVVEGDLRREVTLSIKRLMDLGTYRGLRHRRGLPVRGQRTKTNARTRKGPRKPIKK</sequence>
<comment type="function">
    <text evidence="1">Located at the top of the head of the 30S subunit, it contacts several helices of the 16S rRNA. In the 70S ribosome it contacts the 23S rRNA (bridge B1a) and protein L5 of the 50S subunit (bridge B1b), connecting the 2 subunits; these bridges are implicated in subunit movement. Contacts the tRNAs in the A and P-sites.</text>
</comment>
<comment type="subunit">
    <text evidence="1">Part of the 30S ribosomal subunit. Forms a loose heterodimer with protein S19. Forms two bridges to the 50S subunit in the 70S ribosome.</text>
</comment>
<comment type="similarity">
    <text evidence="1">Belongs to the universal ribosomal protein uS13 family.</text>
</comment>
<name>RS13_YERPP</name>
<reference key="1">
    <citation type="submission" date="2007-02" db="EMBL/GenBank/DDBJ databases">
        <title>Complete sequence of chromosome of Yersinia pestis Pestoides F.</title>
        <authorList>
            <consortium name="US DOE Joint Genome Institute"/>
            <person name="Copeland A."/>
            <person name="Lucas S."/>
            <person name="Lapidus A."/>
            <person name="Barry K."/>
            <person name="Detter J.C."/>
            <person name="Glavina del Rio T."/>
            <person name="Hammon N."/>
            <person name="Israni S."/>
            <person name="Dalin E."/>
            <person name="Tice H."/>
            <person name="Pitluck S."/>
            <person name="Di Bartolo G."/>
            <person name="Chain P."/>
            <person name="Malfatti S."/>
            <person name="Shin M."/>
            <person name="Vergez L."/>
            <person name="Schmutz J."/>
            <person name="Larimer F."/>
            <person name="Land M."/>
            <person name="Hauser L."/>
            <person name="Worsham P."/>
            <person name="Chu M."/>
            <person name="Bearden S."/>
            <person name="Garcia E."/>
            <person name="Richardson P."/>
        </authorList>
    </citation>
    <scope>NUCLEOTIDE SEQUENCE [LARGE SCALE GENOMIC DNA]</scope>
    <source>
        <strain>Pestoides F</strain>
    </source>
</reference>
<dbReference type="EMBL" id="CP000668">
    <property type="protein sequence ID" value="ABP38575.1"/>
    <property type="molecule type" value="Genomic_DNA"/>
</dbReference>
<dbReference type="RefSeq" id="WP_002213346.1">
    <property type="nucleotide sequence ID" value="NZ_CP009715.1"/>
</dbReference>
<dbReference type="SMR" id="A4TH12"/>
<dbReference type="GeneID" id="96663174"/>
<dbReference type="KEGG" id="ypp:YPDSF_0153"/>
<dbReference type="PATRIC" id="fig|386656.14.peg.412"/>
<dbReference type="GO" id="GO:0005829">
    <property type="term" value="C:cytosol"/>
    <property type="evidence" value="ECO:0007669"/>
    <property type="project" value="TreeGrafter"/>
</dbReference>
<dbReference type="GO" id="GO:0015935">
    <property type="term" value="C:small ribosomal subunit"/>
    <property type="evidence" value="ECO:0007669"/>
    <property type="project" value="TreeGrafter"/>
</dbReference>
<dbReference type="GO" id="GO:0019843">
    <property type="term" value="F:rRNA binding"/>
    <property type="evidence" value="ECO:0007669"/>
    <property type="project" value="UniProtKB-UniRule"/>
</dbReference>
<dbReference type="GO" id="GO:0003735">
    <property type="term" value="F:structural constituent of ribosome"/>
    <property type="evidence" value="ECO:0007669"/>
    <property type="project" value="InterPro"/>
</dbReference>
<dbReference type="GO" id="GO:0000049">
    <property type="term" value="F:tRNA binding"/>
    <property type="evidence" value="ECO:0007669"/>
    <property type="project" value="UniProtKB-UniRule"/>
</dbReference>
<dbReference type="GO" id="GO:0006412">
    <property type="term" value="P:translation"/>
    <property type="evidence" value="ECO:0007669"/>
    <property type="project" value="UniProtKB-UniRule"/>
</dbReference>
<dbReference type="FunFam" id="1.10.8.50:FF:000001">
    <property type="entry name" value="30S ribosomal protein S13"/>
    <property type="match status" value="1"/>
</dbReference>
<dbReference type="FunFam" id="4.10.910.10:FF:000001">
    <property type="entry name" value="30S ribosomal protein S13"/>
    <property type="match status" value="1"/>
</dbReference>
<dbReference type="Gene3D" id="1.10.8.50">
    <property type="match status" value="1"/>
</dbReference>
<dbReference type="Gene3D" id="4.10.910.10">
    <property type="entry name" value="30s ribosomal protein s13, domain 2"/>
    <property type="match status" value="1"/>
</dbReference>
<dbReference type="HAMAP" id="MF_01315">
    <property type="entry name" value="Ribosomal_uS13"/>
    <property type="match status" value="1"/>
</dbReference>
<dbReference type="InterPro" id="IPR027437">
    <property type="entry name" value="Rbsml_uS13_C"/>
</dbReference>
<dbReference type="InterPro" id="IPR001892">
    <property type="entry name" value="Ribosomal_uS13"/>
</dbReference>
<dbReference type="InterPro" id="IPR010979">
    <property type="entry name" value="Ribosomal_uS13-like_H2TH"/>
</dbReference>
<dbReference type="InterPro" id="IPR019980">
    <property type="entry name" value="Ribosomal_uS13_bac-type"/>
</dbReference>
<dbReference type="InterPro" id="IPR018269">
    <property type="entry name" value="Ribosomal_uS13_CS"/>
</dbReference>
<dbReference type="NCBIfam" id="TIGR03631">
    <property type="entry name" value="uS13_bact"/>
    <property type="match status" value="1"/>
</dbReference>
<dbReference type="PANTHER" id="PTHR10871">
    <property type="entry name" value="30S RIBOSOMAL PROTEIN S13/40S RIBOSOMAL PROTEIN S18"/>
    <property type="match status" value="1"/>
</dbReference>
<dbReference type="PANTHER" id="PTHR10871:SF1">
    <property type="entry name" value="SMALL RIBOSOMAL SUBUNIT PROTEIN US13M"/>
    <property type="match status" value="1"/>
</dbReference>
<dbReference type="Pfam" id="PF00416">
    <property type="entry name" value="Ribosomal_S13"/>
    <property type="match status" value="1"/>
</dbReference>
<dbReference type="PIRSF" id="PIRSF002134">
    <property type="entry name" value="Ribosomal_S13"/>
    <property type="match status" value="1"/>
</dbReference>
<dbReference type="SUPFAM" id="SSF46946">
    <property type="entry name" value="S13-like H2TH domain"/>
    <property type="match status" value="1"/>
</dbReference>
<dbReference type="PROSITE" id="PS00646">
    <property type="entry name" value="RIBOSOMAL_S13_1"/>
    <property type="match status" value="1"/>
</dbReference>
<dbReference type="PROSITE" id="PS50159">
    <property type="entry name" value="RIBOSOMAL_S13_2"/>
    <property type="match status" value="1"/>
</dbReference>
<keyword id="KW-0687">Ribonucleoprotein</keyword>
<keyword id="KW-0689">Ribosomal protein</keyword>
<keyword id="KW-0694">RNA-binding</keyword>
<keyword id="KW-0699">rRNA-binding</keyword>
<keyword id="KW-0820">tRNA-binding</keyword>
<gene>
    <name evidence="1" type="primary">rpsM</name>
    <name type="ordered locus">YPDSF_0153</name>
</gene>
<feature type="chain" id="PRO_0000306748" description="Small ribosomal subunit protein uS13">
    <location>
        <begin position="1"/>
        <end position="118"/>
    </location>
</feature>
<feature type="region of interest" description="Disordered" evidence="2">
    <location>
        <begin position="92"/>
        <end position="118"/>
    </location>
</feature>
<proteinExistence type="inferred from homology"/>
<evidence type="ECO:0000255" key="1">
    <source>
        <dbReference type="HAMAP-Rule" id="MF_01315"/>
    </source>
</evidence>
<evidence type="ECO:0000256" key="2">
    <source>
        <dbReference type="SAM" id="MobiDB-lite"/>
    </source>
</evidence>
<evidence type="ECO:0000305" key="3"/>
<accession>A4TH12</accession>